<gene>
    <name evidence="1" type="primary">plsB</name>
    <name type="ordered locus">Sama_3480</name>
</gene>
<proteinExistence type="inferred from homology"/>
<accession>A1SBC6</accession>
<name>PLSB_SHEAM</name>
<sequence>MSAHESFWFKSLRWIQKQLVHTIVVPQDPFADLNLDPSRPLVYVMKTESVSDIAALHEITGKLGLPSPYQMLEIDGIKTPRVVCLEGRKPLFGKRDSNEPFLQTFQQLLALHRQQQELDIQLVPVSLYWGRTPGKEDDTMRAAVLEREDPTWLRKCLMILFLGRHNFVQFSRAVSLRHMADEHGTDKRIAHKLARVARVHFRRQRKVMTGPVLPNRQAMFHALLKSDNLKKAIAEEASSKKISEEKARETAIQYLDEIAADYSDSLVRIAERFLTWLWNKLYKGISIKGAEQIRQLHHDGHEIVYVPCHRSHMDYLLLSYILYYEGMVPPHIAAGINLNFWPAGPMFRRGGAFFIRRSFNGNKLYTAVFREYLDQLFAKGYSVEYFTEGGRSRTGRLLAPKTGMLAMTLSSVIRGIERPVTLVPVYLGYDHVMEVATYHKELSGKKKEKESVWQVFGAIRKLGNFGRGYVNFGQPITLQNFLTEKVPNWREEVGEDPEQKPSWLTPVVNALANRVMTRINDAAAASSVTLSSMVLLASEQNALERNQLERQIDLYLSLLKSVPYTSYASVTEGCGKELVDRGIELNKLTETKDDLGTIISIDDSLAISMTYYRNNIIHLFVIPSLIATVMVRHEEVSREELQELVAEFYPLLKAELFMGVTDLPAYVDALVECFKSEGLITGDNRLKLVDDRINQLLLLAGVVGETLKRYAIIFNLLGEQPRMERADLEHHSHRLASRLGAIHGVMAPEFYDKKLYALLSSKLKDLGYLSDKADGDKVRKIRDHANGLLRSSVRQTIIETLNQEQDD</sequence>
<keyword id="KW-0012">Acyltransferase</keyword>
<keyword id="KW-0997">Cell inner membrane</keyword>
<keyword id="KW-1003">Cell membrane</keyword>
<keyword id="KW-0444">Lipid biosynthesis</keyword>
<keyword id="KW-0443">Lipid metabolism</keyword>
<keyword id="KW-0472">Membrane</keyword>
<keyword id="KW-0594">Phospholipid biosynthesis</keyword>
<keyword id="KW-1208">Phospholipid metabolism</keyword>
<keyword id="KW-1185">Reference proteome</keyword>
<keyword id="KW-0808">Transferase</keyword>
<feature type="chain" id="PRO_1000049453" description="Glycerol-3-phosphate acyltransferase">
    <location>
        <begin position="1"/>
        <end position="807"/>
    </location>
</feature>
<feature type="short sequence motif" description="HXXXXD motif">
    <location>
        <begin position="308"/>
        <end position="313"/>
    </location>
</feature>
<organism>
    <name type="scientific">Shewanella amazonensis (strain ATCC BAA-1098 / SB2B)</name>
    <dbReference type="NCBI Taxonomy" id="326297"/>
    <lineage>
        <taxon>Bacteria</taxon>
        <taxon>Pseudomonadati</taxon>
        <taxon>Pseudomonadota</taxon>
        <taxon>Gammaproteobacteria</taxon>
        <taxon>Alteromonadales</taxon>
        <taxon>Shewanellaceae</taxon>
        <taxon>Shewanella</taxon>
    </lineage>
</organism>
<dbReference type="EC" id="2.3.1.15" evidence="1"/>
<dbReference type="EMBL" id="CP000507">
    <property type="protein sequence ID" value="ABM01683.1"/>
    <property type="molecule type" value="Genomic_DNA"/>
</dbReference>
<dbReference type="RefSeq" id="WP_011761586.1">
    <property type="nucleotide sequence ID" value="NC_008700.1"/>
</dbReference>
<dbReference type="SMR" id="A1SBC6"/>
<dbReference type="STRING" id="326297.Sama_3480"/>
<dbReference type="KEGG" id="saz:Sama_3480"/>
<dbReference type="eggNOG" id="COG2937">
    <property type="taxonomic scope" value="Bacteria"/>
</dbReference>
<dbReference type="HOGENOM" id="CLU_015407_0_0_6"/>
<dbReference type="OrthoDB" id="335193at2"/>
<dbReference type="UniPathway" id="UPA00557">
    <property type="reaction ID" value="UER00612"/>
</dbReference>
<dbReference type="Proteomes" id="UP000009175">
    <property type="component" value="Chromosome"/>
</dbReference>
<dbReference type="GO" id="GO:0005886">
    <property type="term" value="C:plasma membrane"/>
    <property type="evidence" value="ECO:0007669"/>
    <property type="project" value="UniProtKB-SubCell"/>
</dbReference>
<dbReference type="GO" id="GO:0004366">
    <property type="term" value="F:glycerol-3-phosphate O-acyltransferase activity"/>
    <property type="evidence" value="ECO:0007669"/>
    <property type="project" value="UniProtKB-UniRule"/>
</dbReference>
<dbReference type="GO" id="GO:0016024">
    <property type="term" value="P:CDP-diacylglycerol biosynthetic process"/>
    <property type="evidence" value="ECO:0007669"/>
    <property type="project" value="UniProtKB-UniRule"/>
</dbReference>
<dbReference type="GO" id="GO:0006631">
    <property type="term" value="P:fatty acid metabolic process"/>
    <property type="evidence" value="ECO:0007669"/>
    <property type="project" value="TreeGrafter"/>
</dbReference>
<dbReference type="CDD" id="cd07993">
    <property type="entry name" value="LPLAT_DHAPAT-like"/>
    <property type="match status" value="1"/>
</dbReference>
<dbReference type="HAMAP" id="MF_00393">
    <property type="entry name" value="Glyc3P_acyltrans"/>
    <property type="match status" value="1"/>
</dbReference>
<dbReference type="InterPro" id="IPR022284">
    <property type="entry name" value="GPAT/DHAPAT"/>
</dbReference>
<dbReference type="InterPro" id="IPR045520">
    <property type="entry name" value="GPAT/DHAPAT_C"/>
</dbReference>
<dbReference type="InterPro" id="IPR041728">
    <property type="entry name" value="GPAT/DHAPAT_LPLAT"/>
</dbReference>
<dbReference type="InterPro" id="IPR028354">
    <property type="entry name" value="GPAT_PlsB"/>
</dbReference>
<dbReference type="InterPro" id="IPR002123">
    <property type="entry name" value="Plipid/glycerol_acylTrfase"/>
</dbReference>
<dbReference type="NCBIfam" id="TIGR03703">
    <property type="entry name" value="plsB"/>
    <property type="match status" value="1"/>
</dbReference>
<dbReference type="NCBIfam" id="NF003441">
    <property type="entry name" value="PRK04974.1"/>
    <property type="match status" value="1"/>
</dbReference>
<dbReference type="PANTHER" id="PTHR12563:SF17">
    <property type="entry name" value="DIHYDROXYACETONE PHOSPHATE ACYLTRANSFERASE"/>
    <property type="match status" value="1"/>
</dbReference>
<dbReference type="PANTHER" id="PTHR12563">
    <property type="entry name" value="GLYCEROL-3-PHOSPHATE ACYLTRANSFERASE"/>
    <property type="match status" value="1"/>
</dbReference>
<dbReference type="Pfam" id="PF01553">
    <property type="entry name" value="Acyltransferase"/>
    <property type="match status" value="1"/>
</dbReference>
<dbReference type="Pfam" id="PF19277">
    <property type="entry name" value="GPAT_C"/>
    <property type="match status" value="1"/>
</dbReference>
<dbReference type="PIRSF" id="PIRSF500064">
    <property type="entry name" value="GPAT"/>
    <property type="match status" value="1"/>
</dbReference>
<dbReference type="PIRSF" id="PIRSF000437">
    <property type="entry name" value="GPAT_DHAPAT"/>
    <property type="match status" value="1"/>
</dbReference>
<dbReference type="SMART" id="SM00563">
    <property type="entry name" value="PlsC"/>
    <property type="match status" value="1"/>
</dbReference>
<dbReference type="SUPFAM" id="SSF69593">
    <property type="entry name" value="Glycerol-3-phosphate (1)-acyltransferase"/>
    <property type="match status" value="1"/>
</dbReference>
<comment type="catalytic activity">
    <reaction evidence="1">
        <text>sn-glycerol 3-phosphate + an acyl-CoA = a 1-acyl-sn-glycero-3-phosphate + CoA</text>
        <dbReference type="Rhea" id="RHEA:15325"/>
        <dbReference type="ChEBI" id="CHEBI:57287"/>
        <dbReference type="ChEBI" id="CHEBI:57597"/>
        <dbReference type="ChEBI" id="CHEBI:57970"/>
        <dbReference type="ChEBI" id="CHEBI:58342"/>
        <dbReference type="EC" id="2.3.1.15"/>
    </reaction>
</comment>
<comment type="pathway">
    <text evidence="1">Phospholipid metabolism; CDP-diacylglycerol biosynthesis; CDP-diacylglycerol from sn-glycerol 3-phosphate: step 1/3.</text>
</comment>
<comment type="subcellular location">
    <subcellularLocation>
        <location evidence="1">Cell inner membrane</location>
        <topology evidence="1">Peripheral membrane protein</topology>
        <orientation evidence="1">Cytoplasmic side</orientation>
    </subcellularLocation>
</comment>
<comment type="domain">
    <text evidence="1">The HXXXXD motif is essential for acyltransferase activity and may constitute the binding site for the phosphate moiety of the glycerol-3-phosphate.</text>
</comment>
<comment type="similarity">
    <text evidence="1">Belongs to the GPAT/DAPAT family.</text>
</comment>
<protein>
    <recommendedName>
        <fullName evidence="1">Glycerol-3-phosphate acyltransferase</fullName>
        <shortName evidence="1">GPAT</shortName>
        <ecNumber evidence="1">2.3.1.15</ecNumber>
    </recommendedName>
</protein>
<evidence type="ECO:0000255" key="1">
    <source>
        <dbReference type="HAMAP-Rule" id="MF_00393"/>
    </source>
</evidence>
<reference key="1">
    <citation type="submission" date="2006-12" db="EMBL/GenBank/DDBJ databases">
        <title>Complete sequence of Shewanella amazonensis SB2B.</title>
        <authorList>
            <consortium name="US DOE Joint Genome Institute"/>
            <person name="Copeland A."/>
            <person name="Lucas S."/>
            <person name="Lapidus A."/>
            <person name="Barry K."/>
            <person name="Detter J.C."/>
            <person name="Glavina del Rio T."/>
            <person name="Hammon N."/>
            <person name="Israni S."/>
            <person name="Dalin E."/>
            <person name="Tice H."/>
            <person name="Pitluck S."/>
            <person name="Munk A.C."/>
            <person name="Brettin T."/>
            <person name="Bruce D."/>
            <person name="Han C."/>
            <person name="Tapia R."/>
            <person name="Gilna P."/>
            <person name="Schmutz J."/>
            <person name="Larimer F."/>
            <person name="Land M."/>
            <person name="Hauser L."/>
            <person name="Kyrpides N."/>
            <person name="Mikhailova N."/>
            <person name="Fredrickson J."/>
            <person name="Richardson P."/>
        </authorList>
    </citation>
    <scope>NUCLEOTIDE SEQUENCE [LARGE SCALE GENOMIC DNA]</scope>
    <source>
        <strain>ATCC BAA-1098 / SB2B</strain>
    </source>
</reference>